<accession>Q9WZI1</accession>
<evidence type="ECO:0000255" key="1"/>
<evidence type="ECO:0000255" key="2">
    <source>
        <dbReference type="HAMAP-Rule" id="MF_01895"/>
    </source>
</evidence>
<feature type="chain" id="PRO_0000166412" description="Ribonuclease R">
    <location>
        <begin position="1"/>
        <end position="710"/>
    </location>
</feature>
<feature type="domain" description="RNB" evidence="1">
    <location>
        <begin position="246"/>
        <end position="573"/>
    </location>
</feature>
<feature type="domain" description="S1 motif" evidence="2">
    <location>
        <begin position="625"/>
        <end position="705"/>
    </location>
</feature>
<comment type="function">
    <text evidence="2">3'-5' exoribonuclease that releases 5'-nucleoside monophosphates and is involved in maturation of structured RNAs.</text>
</comment>
<comment type="catalytic activity">
    <reaction evidence="2">
        <text>Exonucleolytic cleavage in the 3'- to 5'-direction to yield nucleoside 5'-phosphates.</text>
        <dbReference type="EC" id="3.1.13.1"/>
    </reaction>
</comment>
<comment type="subcellular location">
    <subcellularLocation>
        <location evidence="2">Cytoplasm</location>
    </subcellularLocation>
</comment>
<comment type="similarity">
    <text evidence="2">Belongs to the RNR ribonuclease family. RNase R subfamily.</text>
</comment>
<protein>
    <recommendedName>
        <fullName evidence="2">Ribonuclease R</fullName>
        <shortName evidence="2">RNase R</shortName>
        <ecNumber evidence="2">3.1.13.1</ecNumber>
    </recommendedName>
    <alternativeName>
        <fullName>VacB protein homolog</fullName>
    </alternativeName>
</protein>
<proteinExistence type="inferred from homology"/>
<name>RNR_THEMA</name>
<reference key="1">
    <citation type="journal article" date="1999" name="Nature">
        <title>Evidence for lateral gene transfer between Archaea and Bacteria from genome sequence of Thermotoga maritima.</title>
        <authorList>
            <person name="Nelson K.E."/>
            <person name="Clayton R.A."/>
            <person name="Gill S.R."/>
            <person name="Gwinn M.L."/>
            <person name="Dodson R.J."/>
            <person name="Haft D.H."/>
            <person name="Hickey E.K."/>
            <person name="Peterson J.D."/>
            <person name="Nelson W.C."/>
            <person name="Ketchum K.A."/>
            <person name="McDonald L.A."/>
            <person name="Utterback T.R."/>
            <person name="Malek J.A."/>
            <person name="Linher K.D."/>
            <person name="Garrett M.M."/>
            <person name="Stewart A.M."/>
            <person name="Cotton M.D."/>
            <person name="Pratt M.S."/>
            <person name="Phillips C.A."/>
            <person name="Richardson D.L."/>
            <person name="Heidelberg J.F."/>
            <person name="Sutton G.G."/>
            <person name="Fleischmann R.D."/>
            <person name="Eisen J.A."/>
            <person name="White O."/>
            <person name="Salzberg S.L."/>
            <person name="Smith H.O."/>
            <person name="Venter J.C."/>
            <person name="Fraser C.M."/>
        </authorList>
    </citation>
    <scope>NUCLEOTIDE SEQUENCE [LARGE SCALE GENOMIC DNA]</scope>
    <source>
        <strain>ATCC 43589 / DSM 3109 / JCM 10099 / NBRC 100826 / MSB8</strain>
    </source>
</reference>
<gene>
    <name evidence="2" type="primary">rnr</name>
    <name type="synonym">vacB</name>
    <name type="ordered locus">TM_0722</name>
</gene>
<dbReference type="EC" id="3.1.13.1" evidence="2"/>
<dbReference type="EMBL" id="AE000512">
    <property type="protein sequence ID" value="AAD35804.1"/>
    <property type="molecule type" value="Genomic_DNA"/>
</dbReference>
<dbReference type="PIR" id="H72341">
    <property type="entry name" value="H72341"/>
</dbReference>
<dbReference type="RefSeq" id="NP_228531.1">
    <property type="nucleotide sequence ID" value="NC_000853.1"/>
</dbReference>
<dbReference type="RefSeq" id="WP_004081010.1">
    <property type="nucleotide sequence ID" value="NZ_CP011107.1"/>
</dbReference>
<dbReference type="SMR" id="Q9WZI1"/>
<dbReference type="FunCoup" id="Q9WZI1">
    <property type="interactions" value="257"/>
</dbReference>
<dbReference type="STRING" id="243274.TM_0722"/>
<dbReference type="PaxDb" id="243274-THEMA_01050"/>
<dbReference type="EnsemblBacteria" id="AAD35804">
    <property type="protein sequence ID" value="AAD35804"/>
    <property type="gene ID" value="TM_0722"/>
</dbReference>
<dbReference type="KEGG" id="tma:TM0722"/>
<dbReference type="KEGG" id="tmi:THEMA_01050"/>
<dbReference type="KEGG" id="tmm:Tmari_0723"/>
<dbReference type="KEGG" id="tmw:THMA_0738"/>
<dbReference type="eggNOG" id="COG0557">
    <property type="taxonomic scope" value="Bacteria"/>
</dbReference>
<dbReference type="InParanoid" id="Q9WZI1"/>
<dbReference type="OrthoDB" id="9764149at2"/>
<dbReference type="Proteomes" id="UP000008183">
    <property type="component" value="Chromosome"/>
</dbReference>
<dbReference type="GO" id="GO:0005829">
    <property type="term" value="C:cytosol"/>
    <property type="evidence" value="ECO:0000318"/>
    <property type="project" value="GO_Central"/>
</dbReference>
<dbReference type="GO" id="GO:0008859">
    <property type="term" value="F:exoribonuclease II activity"/>
    <property type="evidence" value="ECO:0007669"/>
    <property type="project" value="UniProtKB-UniRule"/>
</dbReference>
<dbReference type="GO" id="GO:0003723">
    <property type="term" value="F:RNA binding"/>
    <property type="evidence" value="ECO:0007669"/>
    <property type="project" value="UniProtKB-UniRule"/>
</dbReference>
<dbReference type="GO" id="GO:0006402">
    <property type="term" value="P:mRNA catabolic process"/>
    <property type="evidence" value="ECO:0000318"/>
    <property type="project" value="GO_Central"/>
</dbReference>
<dbReference type="CDD" id="cd04471">
    <property type="entry name" value="S1_RNase_R"/>
    <property type="match status" value="1"/>
</dbReference>
<dbReference type="Gene3D" id="2.40.50.140">
    <property type="entry name" value="Nucleic acid-binding proteins"/>
    <property type="match status" value="3"/>
</dbReference>
<dbReference type="HAMAP" id="MF_01895">
    <property type="entry name" value="RNase_R"/>
    <property type="match status" value="1"/>
</dbReference>
<dbReference type="InterPro" id="IPR011129">
    <property type="entry name" value="CSD"/>
</dbReference>
<dbReference type="InterPro" id="IPR040476">
    <property type="entry name" value="CSD2"/>
</dbReference>
<dbReference type="InterPro" id="IPR012340">
    <property type="entry name" value="NA-bd_OB-fold"/>
</dbReference>
<dbReference type="InterPro" id="IPR013223">
    <property type="entry name" value="RNase_B_OB_dom"/>
</dbReference>
<dbReference type="InterPro" id="IPR001900">
    <property type="entry name" value="RNase_II/R"/>
</dbReference>
<dbReference type="InterPro" id="IPR022966">
    <property type="entry name" value="RNase_II/R_CS"/>
</dbReference>
<dbReference type="InterPro" id="IPR004476">
    <property type="entry name" value="RNase_II/RNase_R"/>
</dbReference>
<dbReference type="InterPro" id="IPR011805">
    <property type="entry name" value="RNase_R"/>
</dbReference>
<dbReference type="InterPro" id="IPR050180">
    <property type="entry name" value="RNR_Ribonuclease"/>
</dbReference>
<dbReference type="InterPro" id="IPR003029">
    <property type="entry name" value="S1_domain"/>
</dbReference>
<dbReference type="NCBIfam" id="TIGR00358">
    <property type="entry name" value="3_prime_RNase"/>
    <property type="match status" value="1"/>
</dbReference>
<dbReference type="NCBIfam" id="TIGR02063">
    <property type="entry name" value="RNase_R"/>
    <property type="match status" value="1"/>
</dbReference>
<dbReference type="PANTHER" id="PTHR23355:SF9">
    <property type="entry name" value="DIS3-LIKE EXONUCLEASE 2"/>
    <property type="match status" value="1"/>
</dbReference>
<dbReference type="PANTHER" id="PTHR23355">
    <property type="entry name" value="RIBONUCLEASE"/>
    <property type="match status" value="1"/>
</dbReference>
<dbReference type="Pfam" id="PF17876">
    <property type="entry name" value="CSD2"/>
    <property type="match status" value="1"/>
</dbReference>
<dbReference type="Pfam" id="PF08206">
    <property type="entry name" value="OB_RNB"/>
    <property type="match status" value="1"/>
</dbReference>
<dbReference type="Pfam" id="PF00773">
    <property type="entry name" value="RNB"/>
    <property type="match status" value="1"/>
</dbReference>
<dbReference type="Pfam" id="PF00575">
    <property type="entry name" value="S1"/>
    <property type="match status" value="1"/>
</dbReference>
<dbReference type="SMART" id="SM00357">
    <property type="entry name" value="CSP"/>
    <property type="match status" value="1"/>
</dbReference>
<dbReference type="SMART" id="SM00955">
    <property type="entry name" value="RNB"/>
    <property type="match status" value="1"/>
</dbReference>
<dbReference type="SMART" id="SM00316">
    <property type="entry name" value="S1"/>
    <property type="match status" value="1"/>
</dbReference>
<dbReference type="SUPFAM" id="SSF50249">
    <property type="entry name" value="Nucleic acid-binding proteins"/>
    <property type="match status" value="4"/>
</dbReference>
<dbReference type="PROSITE" id="PS01175">
    <property type="entry name" value="RIBONUCLEASE_II"/>
    <property type="match status" value="1"/>
</dbReference>
<dbReference type="PROSITE" id="PS50126">
    <property type="entry name" value="S1"/>
    <property type="match status" value="1"/>
</dbReference>
<organism>
    <name type="scientific">Thermotoga maritima (strain ATCC 43589 / DSM 3109 / JCM 10099 / NBRC 100826 / MSB8)</name>
    <dbReference type="NCBI Taxonomy" id="243274"/>
    <lineage>
        <taxon>Bacteria</taxon>
        <taxon>Thermotogati</taxon>
        <taxon>Thermotogota</taxon>
        <taxon>Thermotogae</taxon>
        <taxon>Thermotogales</taxon>
        <taxon>Thermotogaceae</taxon>
        <taxon>Thermotoga</taxon>
    </lineage>
</organism>
<sequence length="710" mass="81783">MSSIRKKDVERFILSDDYKPMVLKELYKKFRAKTREQRKKVREVVKKLEKEGRIFRDSRGRYRKLGEDLKVGTIEFTRSGYVAFVITDDFEEIAVPVEDTKYAMHKDRVVVEITGTWRGLPRGRVVRVLERGLKRVVGVFDHKGTFGFVVPDDPKIAYDFYVAPENIDGAKPNQKVIAEILKYPSPGKNPEAKVVKVLGDLDDPSIDLPSVIVKHDLPEPGEFPEEVIREANAIPARVRKKDLVGRKDLRDKVIVTIDGEDAKDFDDAISVEKLPNGNYLLGVHIADVSHYVKEGSALDQEAFKRGTSVYLIDTVIPMLPFRLSNGICSLVEGKDRLTMSVEMEIDRDGRVVRYDVYPSVIKSKKRMIYERVNEFLEDPSSMKEYEPFKDLIYNAVELAEILREARRKRGAILDIESDEVKVILDENGQVVDIVPRKRGIAEKLIEEFMIRANETVAEIFDHAGLPFMYRVHEEPDPETIFQLKNYLEAMGIRAKFSHKIHPGMLQKLLEKVKDHPLRSSVERLLVRSMKRAMYSAVNIGHFGLASYAYTHFTSPIRRYPDLVVHRLLKLYLEQNGYFTPEQIEKFSKVLPKIAKHCSRRERVADEAEWDLVAMKKVEYIARHIGEVFNVVVTNITKFGLFVEIPEKSISGLVHISTLDDYYYYDETRNMLIGKRKGKVFRLGDVLKAKVVRADKIRGEIDFVLVEEDEE</sequence>
<keyword id="KW-0963">Cytoplasm</keyword>
<keyword id="KW-0269">Exonuclease</keyword>
<keyword id="KW-0378">Hydrolase</keyword>
<keyword id="KW-0540">Nuclease</keyword>
<keyword id="KW-1185">Reference proteome</keyword>
<keyword id="KW-0694">RNA-binding</keyword>